<organismHost>
    <name type="scientific">Orgyia pseudotsugata</name>
    <name type="common">Douglas-fir tussock moth</name>
    <dbReference type="NCBI Taxonomy" id="33414"/>
</organismHost>
<keyword id="KW-1185">Reference proteome</keyword>
<keyword id="KW-0804">Transcription</keyword>
<keyword id="KW-0805">Transcription regulation</keyword>
<reference key="1">
    <citation type="journal article" date="1995" name="Virology">
        <title>Replication of Orgyia pseudotsugata baculovirus DNA: lef-2 and ie-1 are essential and ie-2, p34, and Op-iap are stimulatory genes.</title>
        <authorList>
            <person name="Ahrens C.H."/>
            <person name="Rohrmann G.F."/>
        </authorList>
    </citation>
    <scope>NUCLEOTIDE SEQUENCE [GENOMIC DNA]</scope>
</reference>
<reference key="2">
    <citation type="journal article" date="1997" name="Virology">
        <title>The sequence of the Orgyia pseudotsugata multinucleocapsid nuclear polyhedrosis virus genome.</title>
        <authorList>
            <person name="Ahrens C.H."/>
            <person name="Russell R.R."/>
            <person name="Funk C.J."/>
            <person name="Evans J."/>
            <person name="Harwood S."/>
            <person name="Rohrmann G.F."/>
        </authorList>
    </citation>
    <scope>NUCLEOTIDE SEQUENCE [LARGE SCALE GENOMIC DNA]</scope>
</reference>
<evidence type="ECO:0000250" key="1"/>
<evidence type="ECO:0000305" key="2"/>
<protein>
    <recommendedName>
        <fullName>Late expression factor 2</fullName>
    </recommendedName>
</protein>
<proteinExistence type="inferred from homology"/>
<gene>
    <name type="primary">LEF-2</name>
    <name type="ORF">ORF6</name>
</gene>
<dbReference type="EMBL" id="D50053">
    <property type="protein sequence ID" value="BAA08770.1"/>
    <property type="molecule type" value="Genomic_DNA"/>
</dbReference>
<dbReference type="EMBL" id="U75930">
    <property type="protein sequence ID" value="AAC59005.1"/>
    <property type="molecule type" value="Genomic_DNA"/>
</dbReference>
<dbReference type="RefSeq" id="NP_046162.1">
    <property type="nucleotide sequence ID" value="NC_001875.2"/>
</dbReference>
<dbReference type="KEGG" id="vg:912094"/>
<dbReference type="OrthoDB" id="19212at10239"/>
<dbReference type="Proteomes" id="UP000009248">
    <property type="component" value="Genome"/>
</dbReference>
<dbReference type="GO" id="GO:0019079">
    <property type="term" value="P:viral genome replication"/>
    <property type="evidence" value="ECO:0000250"/>
    <property type="project" value="UniProtKB"/>
</dbReference>
<dbReference type="GO" id="GO:0019083">
    <property type="term" value="P:viral transcription"/>
    <property type="evidence" value="ECO:0007669"/>
    <property type="project" value="InterPro"/>
</dbReference>
<dbReference type="InterPro" id="IPR004283">
    <property type="entry name" value="Lef-2"/>
</dbReference>
<dbReference type="Pfam" id="PF03041">
    <property type="entry name" value="Baculo_LEF-2"/>
    <property type="match status" value="1"/>
</dbReference>
<sequence>MERVWNPAAGIDGLKRSETYLVDPHDFVGVLTLSPYTVFERGLFVRMSGMRLLALLAAPKPQEPQPAVRRFPQRSRRNVCLKACADGAQSLAKVLAARVSMPPCMSKTMADLSSAPRGNMYRKRFEFNCYLANVITCTKCKTACLIGALLHFYRMDAKCVGEVTHLLIKAQDVYKPSNCAKMKKVTKLCPQASMCKGLNPICNF</sequence>
<name>LEF2_NPVOP</name>
<comment type="function">
    <text evidence="1">Required for late and very late gene expression. Specifically required for expression from the vp39 and polh promoters (By similarity).</text>
</comment>
<comment type="similarity">
    <text evidence="2">Belongs to the baculoviridae LEF-2 family.</text>
</comment>
<accession>Q65370</accession>
<accession>O12547</accession>
<accession>O12836</accession>
<organism>
    <name type="scientific">Orgyia pseudotsugata multicapsid polyhedrosis virus</name>
    <name type="common">OpMNPV</name>
    <dbReference type="NCBI Taxonomy" id="262177"/>
    <lineage>
        <taxon>Viruses</taxon>
        <taxon>Viruses incertae sedis</taxon>
        <taxon>Naldaviricetes</taxon>
        <taxon>Lefavirales</taxon>
        <taxon>Baculoviridae</taxon>
        <taxon>Alphabaculovirus</taxon>
        <taxon>Alphabaculovirus orpseudotsugatae</taxon>
    </lineage>
</organism>
<feature type="chain" id="PRO_0000132821" description="Late expression factor 2">
    <location>
        <begin position="1"/>
        <end position="204"/>
    </location>
</feature>